<name>PDXT_GEOTN</name>
<sequence>MKIGVLGLQGAVQEHVRAIEACGAEAVVVKKTEQLTGLDGLVLPGGESTTMRRLIDRYGLMEPLKQFAADGKPMFGTCAGLILLAKRIVGYDEPHLGLMDITVERNSFGRQRESFEAELSIKGVGDGFVGVFIRAPHIVEVGDEVEVLATYNDRIVAARQGQFLGCSFHPELTDDHRLMRYFLNMVKEAKTVSSI</sequence>
<feature type="chain" id="PRO_1000069460" description="Pyridoxal 5'-phosphate synthase subunit PdxT">
    <location>
        <begin position="1"/>
        <end position="195"/>
    </location>
</feature>
<feature type="active site" description="Nucleophile" evidence="1">
    <location>
        <position position="78"/>
    </location>
</feature>
<feature type="active site" description="Charge relay system" evidence="1">
    <location>
        <position position="169"/>
    </location>
</feature>
<feature type="active site" description="Charge relay system" evidence="1">
    <location>
        <position position="171"/>
    </location>
</feature>
<feature type="binding site" evidence="1">
    <location>
        <begin position="46"/>
        <end position="48"/>
    </location>
    <ligand>
        <name>L-glutamine</name>
        <dbReference type="ChEBI" id="CHEBI:58359"/>
    </ligand>
</feature>
<feature type="binding site" evidence="1">
    <location>
        <position position="105"/>
    </location>
    <ligand>
        <name>L-glutamine</name>
        <dbReference type="ChEBI" id="CHEBI:58359"/>
    </ligand>
</feature>
<feature type="binding site" evidence="1">
    <location>
        <begin position="133"/>
        <end position="134"/>
    </location>
    <ligand>
        <name>L-glutamine</name>
        <dbReference type="ChEBI" id="CHEBI:58359"/>
    </ligand>
</feature>
<organism>
    <name type="scientific">Geobacillus thermodenitrificans (strain NG80-2)</name>
    <dbReference type="NCBI Taxonomy" id="420246"/>
    <lineage>
        <taxon>Bacteria</taxon>
        <taxon>Bacillati</taxon>
        <taxon>Bacillota</taxon>
        <taxon>Bacilli</taxon>
        <taxon>Bacillales</taxon>
        <taxon>Anoxybacillaceae</taxon>
        <taxon>Geobacillus</taxon>
    </lineage>
</organism>
<comment type="function">
    <text evidence="1">Catalyzes the hydrolysis of glutamine to glutamate and ammonia as part of the biosynthesis of pyridoxal 5'-phosphate. The resulting ammonia molecule is channeled to the active site of PdxS.</text>
</comment>
<comment type="catalytic activity">
    <reaction evidence="1">
        <text>aldehydo-D-ribose 5-phosphate + D-glyceraldehyde 3-phosphate + L-glutamine = pyridoxal 5'-phosphate + L-glutamate + phosphate + 3 H2O + H(+)</text>
        <dbReference type="Rhea" id="RHEA:31507"/>
        <dbReference type="ChEBI" id="CHEBI:15377"/>
        <dbReference type="ChEBI" id="CHEBI:15378"/>
        <dbReference type="ChEBI" id="CHEBI:29985"/>
        <dbReference type="ChEBI" id="CHEBI:43474"/>
        <dbReference type="ChEBI" id="CHEBI:58273"/>
        <dbReference type="ChEBI" id="CHEBI:58359"/>
        <dbReference type="ChEBI" id="CHEBI:59776"/>
        <dbReference type="ChEBI" id="CHEBI:597326"/>
        <dbReference type="EC" id="4.3.3.6"/>
    </reaction>
</comment>
<comment type="catalytic activity">
    <reaction evidence="1">
        <text>L-glutamine + H2O = L-glutamate + NH4(+)</text>
        <dbReference type="Rhea" id="RHEA:15889"/>
        <dbReference type="ChEBI" id="CHEBI:15377"/>
        <dbReference type="ChEBI" id="CHEBI:28938"/>
        <dbReference type="ChEBI" id="CHEBI:29985"/>
        <dbReference type="ChEBI" id="CHEBI:58359"/>
        <dbReference type="EC" id="3.5.1.2"/>
    </reaction>
</comment>
<comment type="pathway">
    <text evidence="1">Cofactor biosynthesis; pyridoxal 5'-phosphate biosynthesis.</text>
</comment>
<comment type="subunit">
    <text evidence="1">In the presence of PdxS, forms a dodecamer of heterodimers. Only shows activity in the heterodimer.</text>
</comment>
<comment type="similarity">
    <text evidence="1">Belongs to the glutaminase PdxT/SNO family.</text>
</comment>
<gene>
    <name evidence="1" type="primary">pdxT</name>
    <name type="ordered locus">GTNG_0012</name>
</gene>
<keyword id="KW-0315">Glutamine amidotransferase</keyword>
<keyword id="KW-0378">Hydrolase</keyword>
<keyword id="KW-0456">Lyase</keyword>
<keyword id="KW-0663">Pyridoxal phosphate</keyword>
<dbReference type="EC" id="4.3.3.6" evidence="1"/>
<dbReference type="EC" id="3.5.1.2" evidence="1"/>
<dbReference type="EMBL" id="CP000557">
    <property type="protein sequence ID" value="ABO65399.1"/>
    <property type="molecule type" value="Genomic_DNA"/>
</dbReference>
<dbReference type="RefSeq" id="WP_008882086.1">
    <property type="nucleotide sequence ID" value="NC_009328.1"/>
</dbReference>
<dbReference type="SMR" id="A4IJ95"/>
<dbReference type="MEROPS" id="C26.A32"/>
<dbReference type="GeneID" id="87622439"/>
<dbReference type="KEGG" id="gtn:GTNG_0012"/>
<dbReference type="eggNOG" id="COG0311">
    <property type="taxonomic scope" value="Bacteria"/>
</dbReference>
<dbReference type="HOGENOM" id="CLU_069674_2_0_9"/>
<dbReference type="UniPathway" id="UPA00245"/>
<dbReference type="Proteomes" id="UP000001578">
    <property type="component" value="Chromosome"/>
</dbReference>
<dbReference type="GO" id="GO:0005829">
    <property type="term" value="C:cytosol"/>
    <property type="evidence" value="ECO:0007669"/>
    <property type="project" value="TreeGrafter"/>
</dbReference>
<dbReference type="GO" id="GO:1903600">
    <property type="term" value="C:glutaminase complex"/>
    <property type="evidence" value="ECO:0007669"/>
    <property type="project" value="TreeGrafter"/>
</dbReference>
<dbReference type="GO" id="GO:0004359">
    <property type="term" value="F:glutaminase activity"/>
    <property type="evidence" value="ECO:0007669"/>
    <property type="project" value="UniProtKB-UniRule"/>
</dbReference>
<dbReference type="GO" id="GO:0036381">
    <property type="term" value="F:pyridoxal 5'-phosphate synthase (glutamine hydrolysing) activity"/>
    <property type="evidence" value="ECO:0007669"/>
    <property type="project" value="UniProtKB-UniRule"/>
</dbReference>
<dbReference type="GO" id="GO:0006543">
    <property type="term" value="P:glutamine catabolic process"/>
    <property type="evidence" value="ECO:0007669"/>
    <property type="project" value="UniProtKB-UniRule"/>
</dbReference>
<dbReference type="GO" id="GO:0042823">
    <property type="term" value="P:pyridoxal phosphate biosynthetic process"/>
    <property type="evidence" value="ECO:0007669"/>
    <property type="project" value="UniProtKB-UniRule"/>
</dbReference>
<dbReference type="GO" id="GO:0008614">
    <property type="term" value="P:pyridoxine metabolic process"/>
    <property type="evidence" value="ECO:0007669"/>
    <property type="project" value="TreeGrafter"/>
</dbReference>
<dbReference type="CDD" id="cd01749">
    <property type="entry name" value="GATase1_PB"/>
    <property type="match status" value="1"/>
</dbReference>
<dbReference type="FunFam" id="3.40.50.880:FF:000010">
    <property type="entry name" value="uncharacterized protein LOC100176842 isoform X2"/>
    <property type="match status" value="1"/>
</dbReference>
<dbReference type="Gene3D" id="3.40.50.880">
    <property type="match status" value="1"/>
</dbReference>
<dbReference type="HAMAP" id="MF_01615">
    <property type="entry name" value="PdxT"/>
    <property type="match status" value="1"/>
</dbReference>
<dbReference type="InterPro" id="IPR029062">
    <property type="entry name" value="Class_I_gatase-like"/>
</dbReference>
<dbReference type="InterPro" id="IPR002161">
    <property type="entry name" value="PdxT/SNO"/>
</dbReference>
<dbReference type="InterPro" id="IPR021196">
    <property type="entry name" value="PdxT/SNO_CS"/>
</dbReference>
<dbReference type="NCBIfam" id="TIGR03800">
    <property type="entry name" value="PLP_synth_Pdx2"/>
    <property type="match status" value="1"/>
</dbReference>
<dbReference type="PANTHER" id="PTHR31559">
    <property type="entry name" value="PYRIDOXAL 5'-PHOSPHATE SYNTHASE SUBUNIT SNO"/>
    <property type="match status" value="1"/>
</dbReference>
<dbReference type="PANTHER" id="PTHR31559:SF0">
    <property type="entry name" value="PYRIDOXAL 5'-PHOSPHATE SYNTHASE SUBUNIT SNO1-RELATED"/>
    <property type="match status" value="1"/>
</dbReference>
<dbReference type="Pfam" id="PF01174">
    <property type="entry name" value="SNO"/>
    <property type="match status" value="1"/>
</dbReference>
<dbReference type="PIRSF" id="PIRSF005639">
    <property type="entry name" value="Glut_amidoT_SNO"/>
    <property type="match status" value="1"/>
</dbReference>
<dbReference type="SUPFAM" id="SSF52317">
    <property type="entry name" value="Class I glutamine amidotransferase-like"/>
    <property type="match status" value="1"/>
</dbReference>
<dbReference type="PROSITE" id="PS01236">
    <property type="entry name" value="PDXT_SNO_1"/>
    <property type="match status" value="1"/>
</dbReference>
<dbReference type="PROSITE" id="PS51130">
    <property type="entry name" value="PDXT_SNO_2"/>
    <property type="match status" value="1"/>
</dbReference>
<evidence type="ECO:0000255" key="1">
    <source>
        <dbReference type="HAMAP-Rule" id="MF_01615"/>
    </source>
</evidence>
<protein>
    <recommendedName>
        <fullName evidence="1">Pyridoxal 5'-phosphate synthase subunit PdxT</fullName>
        <ecNumber evidence="1">4.3.3.6</ecNumber>
    </recommendedName>
    <alternativeName>
        <fullName evidence="1">Pdx2</fullName>
    </alternativeName>
    <alternativeName>
        <fullName evidence="1">Pyridoxal 5'-phosphate synthase glutaminase subunit</fullName>
        <ecNumber evidence="1">3.5.1.2</ecNumber>
    </alternativeName>
</protein>
<reference key="1">
    <citation type="journal article" date="2007" name="Proc. Natl. Acad. Sci. U.S.A.">
        <title>Genome and proteome of long-chain alkane degrading Geobacillus thermodenitrificans NG80-2 isolated from a deep-subsurface oil reservoir.</title>
        <authorList>
            <person name="Feng L."/>
            <person name="Wang W."/>
            <person name="Cheng J."/>
            <person name="Ren Y."/>
            <person name="Zhao G."/>
            <person name="Gao C."/>
            <person name="Tang Y."/>
            <person name="Liu X."/>
            <person name="Han W."/>
            <person name="Peng X."/>
            <person name="Liu R."/>
            <person name="Wang L."/>
        </authorList>
    </citation>
    <scope>NUCLEOTIDE SEQUENCE [LARGE SCALE GENOMIC DNA]</scope>
    <source>
        <strain>NG80-2</strain>
    </source>
</reference>
<accession>A4IJ95</accession>
<proteinExistence type="inferred from homology"/>